<evidence type="ECO:0000250" key="1">
    <source>
        <dbReference type="UniProtKB" id="P00410"/>
    </source>
</evidence>
<evidence type="ECO:0000269" key="2">
    <source>
    </source>
</evidence>
<evidence type="ECO:0000269" key="3">
    <source>
    </source>
</evidence>
<evidence type="ECO:0000303" key="4">
    <source>
    </source>
</evidence>
<evidence type="ECO:0000305" key="5"/>
<sequence length="250" mass="28555">MGLLFNNLIMNFDAPSPWGIYFQDSATPQMEGLVELHDNIMYYLVVILFGVGWILLSIIRNYISTKSPISHKYLNHGTLIELIWTITPAVILILIAFPSFKLLYLMDEVSDPSMSVLAEGHQWYWSYQYPDFLDSNDEFIEFDSYIVPESDLEEGALRMLEVDNRVILPELTHVRFIITAGDVIHSFAVPSLGVKCDAYPGRLNQVSVFINREGVFYGQCSEICGILHSSMPIVIESVSLEKFLTWLEEQ</sequence>
<comment type="function">
    <text evidence="1">Component of the cytochrome c oxidase, the last enzyme in the mitochondrial electron transport chain which drives oxidative phosphorylation. The respiratory chain contains 3 multisubunit complexes succinate dehydrogenase (complex II, CII), ubiquinol-cytochrome c oxidoreductase (cytochrome b-c1 complex, complex III, CIII) and cytochrome c oxidase (complex IV, CIV), that cooperate to transfer electrons derived from NADH and succinate to molecular oxygen, creating an electrochemical gradient over the inner membrane that drives transmembrane transport and the ATP synthase. Cytochrome c oxidase is the component of the respiratory chain that catalyzes the reduction of oxygen to water. Electrons originating from reduced cytochrome c in the intermembrane space (IMS) are transferred via the dinuclear copper A center (CU(A)) of Cox2 and heme A of Cox1 to the active site in Cox1, a binuclear center (BNC) formed by heme A3 and copper B (CU(B)). The BNC reduces molecular oxygen to 2 water molecules using 4 electrons from cytochrome c in the IMS and 4 protons from the mitochondrial matrix.</text>
</comment>
<comment type="catalytic activity">
    <reaction evidence="1">
        <text>4 Fe(II)-[cytochrome c] + O2 + 8 H(+)(in) = 4 Fe(III)-[cytochrome c] + 2 H2O + 4 H(+)(out)</text>
        <dbReference type="Rhea" id="RHEA:11436"/>
        <dbReference type="Rhea" id="RHEA-COMP:10350"/>
        <dbReference type="Rhea" id="RHEA-COMP:14399"/>
        <dbReference type="ChEBI" id="CHEBI:15377"/>
        <dbReference type="ChEBI" id="CHEBI:15378"/>
        <dbReference type="ChEBI" id="CHEBI:15379"/>
        <dbReference type="ChEBI" id="CHEBI:29033"/>
        <dbReference type="ChEBI" id="CHEBI:29034"/>
        <dbReference type="EC" id="7.1.1.9"/>
    </reaction>
    <physiologicalReaction direction="left-to-right" evidence="1">
        <dbReference type="Rhea" id="RHEA:11437"/>
    </physiologicalReaction>
</comment>
<comment type="cofactor">
    <cofactor evidence="1">
        <name>Cu cation</name>
        <dbReference type="ChEBI" id="CHEBI:23378"/>
    </cofactor>
    <text evidence="1">Binds a dinuclear copper A center per subunit.</text>
</comment>
<comment type="subunit">
    <text evidence="2 3">Component of the cytochrome c oxidase (complex IV, CIV), a multisubunit enzyme composed of 11 subunits. The complex is composed of a catalytic core of 3 subunits Cox1, Cox2 and Cox3, encoded in the mitochondrial DNA, and 8 supernumerary subunits Cox4, Cox5a/Cox5, Cox6, Cox7, Cox8, Cox7a/Cox9, Cox6b/Cox12 and Cox6a/Cox13, which are encoded in the nuclear genome (PubMed:31316820). The complex exists as a monomer or a dimer and forms respiratory supercomplexes (SCs) in the inner mitochondrial membrane with NADH-ubiquinone oxidoreductase (complex I, CI) and ubiquinol-cytochrome c oxidoreductase (cytochrome b-c1 complex, complex III, CIII), resulting in various different assemblies (supercomplexes I(1)IV(1), I(1)III(3)IV(2), III(2)IV(1) and III(2)IV(2) as well as larger supercomplexes of compositions like I(1)III(2)IV(5-6)) (PubMed:17873079).</text>
</comment>
<comment type="subcellular location">
    <subcellularLocation>
        <location evidence="3">Mitochondrion inner membrane</location>
        <topology evidence="3">Multi-pass membrane protein</topology>
    </subcellularLocation>
</comment>
<comment type="similarity">
    <text evidence="5">Belongs to the cytochrome c oxidase subunit 2 family.</text>
</comment>
<keyword id="KW-0186">Copper</keyword>
<keyword id="KW-0249">Electron transport</keyword>
<keyword id="KW-0460">Magnesium</keyword>
<keyword id="KW-0472">Membrane</keyword>
<keyword id="KW-0479">Metal-binding</keyword>
<keyword id="KW-0496">Mitochondrion</keyword>
<keyword id="KW-0999">Mitochondrion inner membrane</keyword>
<keyword id="KW-1185">Reference proteome</keyword>
<keyword id="KW-0679">Respiratory chain</keyword>
<keyword id="KW-1278">Translocase</keyword>
<keyword id="KW-0812">Transmembrane</keyword>
<keyword id="KW-1133">Transmembrane helix</keyword>
<keyword id="KW-0813">Transport</keyword>
<geneLocation type="mitochondrion"/>
<accession>P00411</accession>
<accession>M1R9T3</accession>
<protein>
    <recommendedName>
        <fullName>Cytochrome c oxidase subunit 2</fullName>
        <ecNumber>7.1.1.9</ecNumber>
    </recommendedName>
    <alternativeName>
        <fullName>Cytochrome c oxidase polypeptide II</fullName>
    </alternativeName>
    <alternativeName>
        <fullName evidence="4">Cytochrome c oxidase subunit Cox2</fullName>
    </alternativeName>
</protein>
<proteinExistence type="evidence at protein level"/>
<name>COX2_NEUCR</name>
<organism>
    <name type="scientific">Neurospora crassa (strain ATCC 24698 / 74-OR23-1A / CBS 708.71 / DSM 1257 / FGSC 987)</name>
    <dbReference type="NCBI Taxonomy" id="367110"/>
    <lineage>
        <taxon>Eukaryota</taxon>
        <taxon>Fungi</taxon>
        <taxon>Dikarya</taxon>
        <taxon>Ascomycota</taxon>
        <taxon>Pezizomycotina</taxon>
        <taxon>Sordariomycetes</taxon>
        <taxon>Sordariomycetidae</taxon>
        <taxon>Sordariales</taxon>
        <taxon>Sordariaceae</taxon>
        <taxon>Neurospora</taxon>
    </lineage>
</organism>
<feature type="chain" id="PRO_0000183638" description="Cytochrome c oxidase subunit 2">
    <location>
        <begin position="1"/>
        <end position="250"/>
    </location>
</feature>
<feature type="topological domain" description="Mitochondrial intermembrane" evidence="3">
    <location>
        <begin position="1"/>
        <end position="27"/>
    </location>
</feature>
<feature type="transmembrane region" description="Helical; Name=1" evidence="3">
    <location>
        <begin position="28"/>
        <end position="61"/>
    </location>
</feature>
<feature type="topological domain" description="Mitochondrial matrix" evidence="3">
    <location>
        <begin position="62"/>
        <end position="77"/>
    </location>
</feature>
<feature type="transmembrane region" description="Helical; Name=2" evidence="3">
    <location>
        <begin position="78"/>
        <end position="107"/>
    </location>
</feature>
<feature type="topological domain" description="Mitochondrial intermembrane" evidence="3">
    <location>
        <begin position="108"/>
        <end position="250"/>
    </location>
</feature>
<feature type="binding site" evidence="1">
    <location>
        <position position="185"/>
    </location>
    <ligand>
        <name>Cu cation</name>
        <dbReference type="ChEBI" id="CHEBI:23378"/>
        <label>A1</label>
    </ligand>
</feature>
<feature type="binding site" evidence="1">
    <location>
        <position position="220"/>
    </location>
    <ligand>
        <name>Cu cation</name>
        <dbReference type="ChEBI" id="CHEBI:23378"/>
        <label>A1</label>
    </ligand>
</feature>
<feature type="binding site" evidence="1">
    <location>
        <position position="220"/>
    </location>
    <ligand>
        <name>Cu cation</name>
        <dbReference type="ChEBI" id="CHEBI:23378"/>
        <label>A2</label>
    </ligand>
</feature>
<feature type="binding site" evidence="1">
    <location>
        <position position="222"/>
    </location>
    <ligand>
        <name>Cu cation</name>
        <dbReference type="ChEBI" id="CHEBI:23378"/>
        <label>A2</label>
    </ligand>
</feature>
<feature type="binding site" evidence="1">
    <location>
        <position position="222"/>
    </location>
    <ligand>
        <name>Mg(2+)</name>
        <dbReference type="ChEBI" id="CHEBI:18420"/>
        <note>ligand shared with COX1</note>
    </ligand>
</feature>
<feature type="binding site" evidence="1">
    <location>
        <position position="224"/>
    </location>
    <ligand>
        <name>Cu cation</name>
        <dbReference type="ChEBI" id="CHEBI:23378"/>
        <label>A1</label>
    </ligand>
</feature>
<feature type="binding site" evidence="1">
    <location>
        <position position="224"/>
    </location>
    <ligand>
        <name>Cu cation</name>
        <dbReference type="ChEBI" id="CHEBI:23378"/>
        <label>A2</label>
    </ligand>
</feature>
<feature type="binding site" evidence="1">
    <location>
        <position position="228"/>
    </location>
    <ligand>
        <name>Cu cation</name>
        <dbReference type="ChEBI" id="CHEBI:23378"/>
        <label>A2</label>
    </ligand>
</feature>
<feature type="binding site" evidence="1">
    <location>
        <position position="231"/>
    </location>
    <ligand>
        <name>Cu cation</name>
        <dbReference type="ChEBI" id="CHEBI:23378"/>
        <label>A1</label>
    </ligand>
</feature>
<feature type="sequence conflict" description="In Ref. 1; AAA31959 and 4; CAA32813." evidence="5" ref="1 4">
    <original>G</original>
    <variation>V</variation>
    <location>
        <position position="50"/>
    </location>
</feature>
<feature type="sequence conflict" description="In Ref. 1; AAA31959." evidence="5" ref="1">
    <original>S</original>
    <variation>D</variation>
    <location>
        <position position="186"/>
    </location>
</feature>
<feature type="sequence conflict" description="In Ref. 1; AAA31959." evidence="5" ref="1">
    <original>G</original>
    <variation>R</variation>
    <location>
        <position position="201"/>
    </location>
</feature>
<gene>
    <name type="primary">cox-2</name>
    <name type="synonym">cox2</name>
    <name type="synonym">oxi1</name>
    <name type="ORF">NCM018</name>
    <name type="ORF">NCU16028</name>
</gene>
<reference key="1">
    <citation type="journal article" date="1983" name="J. Biol. Chem.">
        <title>Cytochrome oxidase subunit 2 gene in Neurospora crassa mitochondria.</title>
        <authorList>
            <person name="Macino G."/>
            <person name="Morelli G."/>
        </authorList>
    </citation>
    <scope>NUCLEOTIDE SEQUENCE [GENOMIC DNA]</scope>
    <source>
        <strain>ATCC 24698 / 74-OR23-1A / CBS 708.71 / DSM 1257 / FGSC 987</strain>
    </source>
</reference>
<reference key="2">
    <citation type="journal article" date="2003" name="Nature">
        <title>The genome sequence of the filamentous fungus Neurospora crassa.</title>
        <authorList>
            <person name="Galagan J.E."/>
            <person name="Calvo S.E."/>
            <person name="Borkovich K.A."/>
            <person name="Selker E.U."/>
            <person name="Read N.D."/>
            <person name="Jaffe D.B."/>
            <person name="FitzHugh W."/>
            <person name="Ma L.-J."/>
            <person name="Smirnov S."/>
            <person name="Purcell S."/>
            <person name="Rehman B."/>
            <person name="Elkins T."/>
            <person name="Engels R."/>
            <person name="Wang S."/>
            <person name="Nielsen C.B."/>
            <person name="Butler J."/>
            <person name="Endrizzi M."/>
            <person name="Qui D."/>
            <person name="Ianakiev P."/>
            <person name="Bell-Pedersen D."/>
            <person name="Nelson M.A."/>
            <person name="Werner-Washburne M."/>
            <person name="Selitrennikoff C.P."/>
            <person name="Kinsey J.A."/>
            <person name="Braun E.L."/>
            <person name="Zelter A."/>
            <person name="Schulte U."/>
            <person name="Kothe G.O."/>
            <person name="Jedd G."/>
            <person name="Mewes H.-W."/>
            <person name="Staben C."/>
            <person name="Marcotte E."/>
            <person name="Greenberg D."/>
            <person name="Roy A."/>
            <person name="Foley K."/>
            <person name="Naylor J."/>
            <person name="Stange-Thomann N."/>
            <person name="Barrett R."/>
            <person name="Gnerre S."/>
            <person name="Kamal M."/>
            <person name="Kamvysselis M."/>
            <person name="Mauceli E.W."/>
            <person name="Bielke C."/>
            <person name="Rudd S."/>
            <person name="Frishman D."/>
            <person name="Krystofova S."/>
            <person name="Rasmussen C."/>
            <person name="Metzenberg R.L."/>
            <person name="Perkins D.D."/>
            <person name="Kroken S."/>
            <person name="Cogoni C."/>
            <person name="Macino G."/>
            <person name="Catcheside D.E.A."/>
            <person name="Li W."/>
            <person name="Pratt R.J."/>
            <person name="Osmani S.A."/>
            <person name="DeSouza C.P.C."/>
            <person name="Glass N.L."/>
            <person name="Orbach M.J."/>
            <person name="Berglund J.A."/>
            <person name="Voelker R."/>
            <person name="Yarden O."/>
            <person name="Plamann M."/>
            <person name="Seiler S."/>
            <person name="Dunlap J.C."/>
            <person name="Radford A."/>
            <person name="Aramayo R."/>
            <person name="Natvig D.O."/>
            <person name="Alex L.A."/>
            <person name="Mannhaupt G."/>
            <person name="Ebbole D.J."/>
            <person name="Freitag M."/>
            <person name="Paulsen I."/>
            <person name="Sachs M.S."/>
            <person name="Lander E.S."/>
            <person name="Nusbaum C."/>
            <person name="Birren B.W."/>
        </authorList>
    </citation>
    <scope>NUCLEOTIDE SEQUENCE [LARGE SCALE GENOMIC DNA]</scope>
    <source>
        <strain>ATCC 24698 / 74-OR23-1A / CBS 708.71 / DSM 1257 / FGSC 987</strain>
    </source>
</reference>
<reference key="3">
    <citation type="book" date="2004" name="The Mycota II, Genetics and Biotechnology (2nd edition)">
        <title>Mitochondrial genetics of Neurospora.</title>
        <editorList>
            <person name="Kueck U."/>
        </editorList>
        <authorList>
            <person name="Kennell J.C."/>
            <person name="Collins R.A."/>
            <person name="Griffiths A.J.F."/>
            <person name="Nargang F.E."/>
        </authorList>
    </citation>
    <scope>GENOME REANNOTATION</scope>
    <source>
        <strain>ATCC 24698 / 74-OR23-1A / CBS 708.71 / DSM 1257 / FGSC 987</strain>
    </source>
</reference>
<reference key="4">
    <citation type="journal article" date="1988" name="Genetics">
        <title>Molecular characterization of the mitochondrial DNA of a new stopper mutant ER-3 of Neurospora crassa.</title>
        <authorList>
            <person name="Almasan A."/>
            <person name="Mishra N.C."/>
        </authorList>
    </citation>
    <scope>NUCLEOTIDE SEQUENCE [GENOMIC DNA] OF 1-65</scope>
    <source>
        <strain>RL3-8A</strain>
    </source>
</reference>
<reference key="5">
    <citation type="journal article" date="1982" name="FEBS Lett.">
        <title>The mitochondrially made subunit 2 of Neurospora crassa cytochrome aa3 is synthesized as a precursor protein.</title>
        <authorList>
            <person name="van den Boogaart P."/>
            <person name="van Dijk S."/>
            <person name="Agsteribbe E."/>
        </authorList>
    </citation>
    <scope>NUCLEOTIDE SEQUENCE [GENOMIC DNA] OF 1-54</scope>
    <source>
        <strain>ANT-1</strain>
    </source>
</reference>
<reference key="6">
    <citation type="journal article" date="2007" name="Eukaryot. Cell">
        <title>Supramolecular organization of the respiratory chain in Neurospora crassa mitochondria.</title>
        <authorList>
            <person name="Marques I."/>
            <person name="Dencher N.A."/>
            <person name="Videira A."/>
            <person name="Krause F."/>
        </authorList>
    </citation>
    <scope>COMPOSITION OF THE CYTOCHROME C OXIDASE COMPLEX</scope>
    <scope>IDENTIFICATION BY MASS SPECTROMETRY</scope>
</reference>
<reference key="7">
    <citation type="journal article" date="2019" name="IUCrJ">
        <title>Cryo-EM structure of Neurospora crassa respiratory complex IV.</title>
        <authorList>
            <person name="Bausewein T."/>
            <person name="Nussberger S."/>
            <person name="Kuehlbrandt W."/>
        </authorList>
    </citation>
    <scope>STRUCTURE BY ELECTRON MICROSCOPY (5.5 ANGSTROMS)</scope>
    <scope>SUBUNIT</scope>
</reference>
<dbReference type="EC" id="7.1.1.9"/>
<dbReference type="EMBL" id="K00825">
    <property type="protein sequence ID" value="AAA31959.2"/>
    <property type="molecule type" value="Genomic_DNA"/>
</dbReference>
<dbReference type="EMBL" id="KC683708">
    <property type="protein sequence ID" value="AGG16017.1"/>
    <property type="molecule type" value="Genomic_DNA"/>
</dbReference>
<dbReference type="EMBL" id="X14681">
    <property type="protein sequence ID" value="CAA32813.1"/>
    <property type="molecule type" value="Genomic_DNA"/>
</dbReference>
<dbReference type="EMBL" id="J01429">
    <property type="status" value="NOT_ANNOTATED_CDS"/>
    <property type="molecule type" value="Genomic_DNA"/>
</dbReference>
<dbReference type="PIR" id="A00479">
    <property type="entry name" value="OBNC2"/>
</dbReference>
<dbReference type="RefSeq" id="YP_009126729.1">
    <property type="nucleotide sequence ID" value="NC_026614.1"/>
</dbReference>
<dbReference type="SMR" id="P00411"/>
<dbReference type="FunCoup" id="P00411">
    <property type="interactions" value="212"/>
</dbReference>
<dbReference type="STRING" id="367110.P00411"/>
<dbReference type="EnsemblFungi" id="AGG16017">
    <property type="protein sequence ID" value="AGG16017"/>
    <property type="gene ID" value="NCU16028"/>
</dbReference>
<dbReference type="GeneID" id="23681583"/>
<dbReference type="KEGG" id="ncr:NCU16028"/>
<dbReference type="VEuPathDB" id="FungiDB:NCU16028"/>
<dbReference type="InParanoid" id="P00411"/>
<dbReference type="OrthoDB" id="539285at2759"/>
<dbReference type="Proteomes" id="UP000001805">
    <property type="component" value="Mitochondrion"/>
</dbReference>
<dbReference type="GO" id="GO:0005743">
    <property type="term" value="C:mitochondrial inner membrane"/>
    <property type="evidence" value="ECO:0007669"/>
    <property type="project" value="UniProtKB-SubCell"/>
</dbReference>
<dbReference type="GO" id="GO:0045277">
    <property type="term" value="C:respiratory chain complex IV"/>
    <property type="evidence" value="ECO:0007669"/>
    <property type="project" value="EnsemblFungi"/>
</dbReference>
<dbReference type="GO" id="GO:0005507">
    <property type="term" value="F:copper ion binding"/>
    <property type="evidence" value="ECO:0007669"/>
    <property type="project" value="InterPro"/>
</dbReference>
<dbReference type="GO" id="GO:0004129">
    <property type="term" value="F:cytochrome-c oxidase activity"/>
    <property type="evidence" value="ECO:0007669"/>
    <property type="project" value="UniProtKB-EC"/>
</dbReference>
<dbReference type="GO" id="GO:0042773">
    <property type="term" value="P:ATP synthesis coupled electron transport"/>
    <property type="evidence" value="ECO:0000318"/>
    <property type="project" value="GO_Central"/>
</dbReference>
<dbReference type="GO" id="GO:0006123">
    <property type="term" value="P:mitochondrial electron transport, cytochrome c to oxygen"/>
    <property type="evidence" value="ECO:0007669"/>
    <property type="project" value="EnsemblFungi"/>
</dbReference>
<dbReference type="CDD" id="cd13912">
    <property type="entry name" value="CcO_II_C"/>
    <property type="match status" value="1"/>
</dbReference>
<dbReference type="FunFam" id="1.10.287.90:FF:000004">
    <property type="entry name" value="Cytochrome c oxidase subunit 2"/>
    <property type="match status" value="1"/>
</dbReference>
<dbReference type="FunFam" id="2.60.40.420:FF:000001">
    <property type="entry name" value="Cytochrome c oxidase subunit 2"/>
    <property type="match status" value="1"/>
</dbReference>
<dbReference type="Gene3D" id="1.10.287.90">
    <property type="match status" value="1"/>
</dbReference>
<dbReference type="Gene3D" id="2.60.40.420">
    <property type="entry name" value="Cupredoxins - blue copper proteins"/>
    <property type="match status" value="1"/>
</dbReference>
<dbReference type="InterPro" id="IPR045187">
    <property type="entry name" value="CcO_II"/>
</dbReference>
<dbReference type="InterPro" id="IPR002429">
    <property type="entry name" value="CcO_II-like_C"/>
</dbReference>
<dbReference type="InterPro" id="IPR034210">
    <property type="entry name" value="CcO_II_C"/>
</dbReference>
<dbReference type="InterPro" id="IPR001505">
    <property type="entry name" value="Copper_CuA"/>
</dbReference>
<dbReference type="InterPro" id="IPR008972">
    <property type="entry name" value="Cupredoxin"/>
</dbReference>
<dbReference type="InterPro" id="IPR014222">
    <property type="entry name" value="Cyt_c_oxidase_su2"/>
</dbReference>
<dbReference type="InterPro" id="IPR011759">
    <property type="entry name" value="Cyt_c_oxidase_su2_TM_dom"/>
</dbReference>
<dbReference type="InterPro" id="IPR036257">
    <property type="entry name" value="Cyt_c_oxidase_su2_TM_sf"/>
</dbReference>
<dbReference type="NCBIfam" id="TIGR02866">
    <property type="entry name" value="CoxB"/>
    <property type="match status" value="1"/>
</dbReference>
<dbReference type="PANTHER" id="PTHR22888:SF9">
    <property type="entry name" value="CYTOCHROME C OXIDASE SUBUNIT 2"/>
    <property type="match status" value="1"/>
</dbReference>
<dbReference type="PANTHER" id="PTHR22888">
    <property type="entry name" value="CYTOCHROME C OXIDASE, SUBUNIT II"/>
    <property type="match status" value="1"/>
</dbReference>
<dbReference type="Pfam" id="PF00116">
    <property type="entry name" value="COX2"/>
    <property type="match status" value="1"/>
</dbReference>
<dbReference type="Pfam" id="PF02790">
    <property type="entry name" value="COX2_TM"/>
    <property type="match status" value="1"/>
</dbReference>
<dbReference type="PRINTS" id="PR01166">
    <property type="entry name" value="CYCOXIDASEII"/>
</dbReference>
<dbReference type="SUPFAM" id="SSF49503">
    <property type="entry name" value="Cupredoxins"/>
    <property type="match status" value="1"/>
</dbReference>
<dbReference type="SUPFAM" id="SSF81464">
    <property type="entry name" value="Cytochrome c oxidase subunit II-like, transmembrane region"/>
    <property type="match status" value="1"/>
</dbReference>
<dbReference type="PROSITE" id="PS00078">
    <property type="entry name" value="COX2"/>
    <property type="match status" value="1"/>
</dbReference>
<dbReference type="PROSITE" id="PS50857">
    <property type="entry name" value="COX2_CUA"/>
    <property type="match status" value="1"/>
</dbReference>
<dbReference type="PROSITE" id="PS50999">
    <property type="entry name" value="COX2_TM"/>
    <property type="match status" value="1"/>
</dbReference>